<keyword id="KW-0067">ATP-binding</keyword>
<keyword id="KW-0235">DNA replication</keyword>
<keyword id="KW-0547">Nucleotide-binding</keyword>
<keyword id="KW-1185">Reference proteome</keyword>
<name>RFCS1_PYRAE</name>
<proteinExistence type="inferred from homology"/>
<gene>
    <name evidence="1" type="primary">rfcS1</name>
    <name type="ordered locus">PAE0734</name>
</gene>
<evidence type="ECO:0000255" key="1">
    <source>
        <dbReference type="HAMAP-Rule" id="MF_01509"/>
    </source>
</evidence>
<protein>
    <recommendedName>
        <fullName evidence="1">Replication factor C small subunit 1</fullName>
        <shortName evidence="1">RFC small subunit 1</shortName>
    </recommendedName>
    <alternativeName>
        <fullName evidence="1">Clamp loader small subunit 1</fullName>
    </alternativeName>
</protein>
<feature type="chain" id="PRO_0000135981" description="Replication factor C small subunit 1">
    <location>
        <begin position="1"/>
        <end position="329"/>
    </location>
</feature>
<feature type="binding site" evidence="1">
    <location>
        <begin position="44"/>
        <end position="51"/>
    </location>
    <ligand>
        <name>ATP</name>
        <dbReference type="ChEBI" id="CHEBI:30616"/>
    </ligand>
</feature>
<comment type="function">
    <text evidence="1">Part of the RFC clamp loader complex which loads the PCNA sliding clamp onto DNA.</text>
</comment>
<comment type="subunit">
    <text evidence="1">Heteromultimer composed of small subunits (RfcS) and large subunits (RfcL).</text>
</comment>
<comment type="similarity">
    <text evidence="1">Belongs to the activator 1 small subunits family. RfcS subfamily.</text>
</comment>
<reference key="1">
    <citation type="journal article" date="2002" name="Proc. Natl. Acad. Sci. U.S.A.">
        <title>Genome sequence of the hyperthermophilic crenarchaeon Pyrobaculum aerophilum.</title>
        <authorList>
            <person name="Fitz-Gibbon S.T."/>
            <person name="Ladner H."/>
            <person name="Kim U.-J."/>
            <person name="Stetter K.O."/>
            <person name="Simon M.I."/>
            <person name="Miller J.H."/>
        </authorList>
    </citation>
    <scope>NUCLEOTIDE SEQUENCE [LARGE SCALE GENOMIC DNA]</scope>
    <source>
        <strain>ATCC 51768 / DSM 7523 / JCM 9630 / CIP 104966 / NBRC 100827 / IM2</strain>
    </source>
</reference>
<sequence length="329" mass="37392">MAELFWFEKYRPRSFDEVVDLEEVKARLREFVKAGNMPHLLFYGPPGTGKTTMALVLARELYGEYWRENTLELNASDERGINVIRERVKEFARTAPVGKAPFKLVILDEADNMTSDAQQALRRIMEIYAQNTRFILLANYVSRIIDPIISRCAVFRFSPMPRSLMAERLKFIAKNEGVELREDAINMIYELSEGDMRKAINLLQVAAATNKVVDANAVASAAIAVRPADIIELFNLAISGDFVKAREKLRELMYLKGIAGADFIRAFQRELIRMPIDDDIKAEIAELLADVDYRLTQGADEEIQLTYLLTKLGAIGRRVKPATTQPRKK</sequence>
<dbReference type="EMBL" id="AE009441">
    <property type="protein sequence ID" value="AAL62989.1"/>
    <property type="molecule type" value="Genomic_DNA"/>
</dbReference>
<dbReference type="RefSeq" id="WP_011007461.1">
    <property type="nucleotide sequence ID" value="NC_003364.1"/>
</dbReference>
<dbReference type="SMR" id="Q8ZYK4"/>
<dbReference type="FunCoup" id="Q8ZYK4">
    <property type="interactions" value="118"/>
</dbReference>
<dbReference type="STRING" id="178306.PAE0734"/>
<dbReference type="EnsemblBacteria" id="AAL62989">
    <property type="protein sequence ID" value="AAL62989"/>
    <property type="gene ID" value="PAE0734"/>
</dbReference>
<dbReference type="GeneID" id="1465216"/>
<dbReference type="KEGG" id="pai:PAE0734"/>
<dbReference type="PATRIC" id="fig|178306.9.peg.534"/>
<dbReference type="eggNOG" id="arCOG00469">
    <property type="taxonomic scope" value="Archaea"/>
</dbReference>
<dbReference type="HOGENOM" id="CLU_042324_2_1_2"/>
<dbReference type="InParanoid" id="Q8ZYK4"/>
<dbReference type="Proteomes" id="UP000002439">
    <property type="component" value="Chromosome"/>
</dbReference>
<dbReference type="GO" id="GO:0005663">
    <property type="term" value="C:DNA replication factor C complex"/>
    <property type="evidence" value="ECO:0000318"/>
    <property type="project" value="GO_Central"/>
</dbReference>
<dbReference type="GO" id="GO:0005524">
    <property type="term" value="F:ATP binding"/>
    <property type="evidence" value="ECO:0007669"/>
    <property type="project" value="UniProtKB-UniRule"/>
</dbReference>
<dbReference type="GO" id="GO:0016887">
    <property type="term" value="F:ATP hydrolysis activity"/>
    <property type="evidence" value="ECO:0007669"/>
    <property type="project" value="InterPro"/>
</dbReference>
<dbReference type="GO" id="GO:0003677">
    <property type="term" value="F:DNA binding"/>
    <property type="evidence" value="ECO:0007669"/>
    <property type="project" value="InterPro"/>
</dbReference>
<dbReference type="GO" id="GO:0003689">
    <property type="term" value="F:DNA clamp loader activity"/>
    <property type="evidence" value="ECO:0007669"/>
    <property type="project" value="UniProtKB-UniRule"/>
</dbReference>
<dbReference type="GO" id="GO:0006281">
    <property type="term" value="P:DNA repair"/>
    <property type="evidence" value="ECO:0000318"/>
    <property type="project" value="GO_Central"/>
</dbReference>
<dbReference type="GO" id="GO:0006261">
    <property type="term" value="P:DNA-templated DNA replication"/>
    <property type="evidence" value="ECO:0000318"/>
    <property type="project" value="GO_Central"/>
</dbReference>
<dbReference type="CDD" id="cd00009">
    <property type="entry name" value="AAA"/>
    <property type="match status" value="1"/>
</dbReference>
<dbReference type="CDD" id="cd18140">
    <property type="entry name" value="HLD_clamp_RFC"/>
    <property type="match status" value="1"/>
</dbReference>
<dbReference type="FunFam" id="1.20.272.10:FF:000029">
    <property type="entry name" value="Replication factor C small subunit"/>
    <property type="match status" value="1"/>
</dbReference>
<dbReference type="FunFam" id="3.40.50.300:FF:000129">
    <property type="entry name" value="Replication factor C subunit 5"/>
    <property type="match status" value="1"/>
</dbReference>
<dbReference type="Gene3D" id="1.10.8.60">
    <property type="match status" value="1"/>
</dbReference>
<dbReference type="Gene3D" id="1.20.272.10">
    <property type="match status" value="1"/>
</dbReference>
<dbReference type="Gene3D" id="3.40.50.300">
    <property type="entry name" value="P-loop containing nucleotide triphosphate hydrolases"/>
    <property type="match status" value="1"/>
</dbReference>
<dbReference type="HAMAP" id="MF_01509">
    <property type="entry name" value="RfcS"/>
    <property type="match status" value="1"/>
</dbReference>
<dbReference type="InterPro" id="IPR003593">
    <property type="entry name" value="AAA+_ATPase"/>
</dbReference>
<dbReference type="InterPro" id="IPR003959">
    <property type="entry name" value="ATPase_AAA_core"/>
</dbReference>
<dbReference type="InterPro" id="IPR008921">
    <property type="entry name" value="DNA_pol3_clamp-load_cplx_C"/>
</dbReference>
<dbReference type="InterPro" id="IPR050238">
    <property type="entry name" value="DNA_Rep/Repair_Clamp_Loader"/>
</dbReference>
<dbReference type="InterPro" id="IPR027417">
    <property type="entry name" value="P-loop_NTPase"/>
</dbReference>
<dbReference type="InterPro" id="IPR023748">
    <property type="entry name" value="Rep_factor-C_ssu_arc"/>
</dbReference>
<dbReference type="InterPro" id="IPR013748">
    <property type="entry name" value="Rep_factorC_C"/>
</dbReference>
<dbReference type="InterPro" id="IPR047854">
    <property type="entry name" value="RFC_lid"/>
</dbReference>
<dbReference type="NCBIfam" id="NF001679">
    <property type="entry name" value="PRK00440.1"/>
    <property type="match status" value="1"/>
</dbReference>
<dbReference type="PANTHER" id="PTHR11669">
    <property type="entry name" value="REPLICATION FACTOR C / DNA POLYMERASE III GAMMA-TAU SUBUNIT"/>
    <property type="match status" value="1"/>
</dbReference>
<dbReference type="PANTHER" id="PTHR11669:SF20">
    <property type="entry name" value="REPLICATION FACTOR C SUBUNIT 4"/>
    <property type="match status" value="1"/>
</dbReference>
<dbReference type="Pfam" id="PF00004">
    <property type="entry name" value="AAA"/>
    <property type="match status" value="1"/>
</dbReference>
<dbReference type="Pfam" id="PF21960">
    <property type="entry name" value="RCF1-5-like_lid"/>
    <property type="match status" value="1"/>
</dbReference>
<dbReference type="Pfam" id="PF08542">
    <property type="entry name" value="Rep_fac_C"/>
    <property type="match status" value="1"/>
</dbReference>
<dbReference type="SMART" id="SM00382">
    <property type="entry name" value="AAA"/>
    <property type="match status" value="1"/>
</dbReference>
<dbReference type="SUPFAM" id="SSF52540">
    <property type="entry name" value="P-loop containing nucleoside triphosphate hydrolases"/>
    <property type="match status" value="1"/>
</dbReference>
<dbReference type="SUPFAM" id="SSF48019">
    <property type="entry name" value="post-AAA+ oligomerization domain-like"/>
    <property type="match status" value="1"/>
</dbReference>
<accession>Q8ZYK4</accession>
<organism>
    <name type="scientific">Pyrobaculum aerophilum (strain ATCC 51768 / DSM 7523 / JCM 9630 / CIP 104966 / NBRC 100827 / IM2)</name>
    <dbReference type="NCBI Taxonomy" id="178306"/>
    <lineage>
        <taxon>Archaea</taxon>
        <taxon>Thermoproteota</taxon>
        <taxon>Thermoprotei</taxon>
        <taxon>Thermoproteales</taxon>
        <taxon>Thermoproteaceae</taxon>
        <taxon>Pyrobaculum</taxon>
    </lineage>
</organism>